<sequence>MSVNDSTHIKTRFAPSPTGYLHVGGARTALFNYLFAKKFGGTFLLRIEDTDPERSKPEYSEQILISMKWLGLDWDEGPYHQSERMHIYQQYTQKLLEEGKAYRCFCTTEELEQMREQQRQQGLPTRYDGRCSRLTQEEIEERLNKGMPFAVRLKVPQDRGIIAWDDMVKGHIEINSSELDDFILVRSDGTPTYNFAVVIDDHTMGVTHVLRGEDHIPNTPKQILIYEALGWETPEFGHVPMILGKDKTKLSKRHGAVGVEAYRDEGFLPEALFNFLALLGASYDPDREVYTKQELIDLFDPKKIGLHPAVFDPDKLYYINREHMKMLPPEELLDRIRPFAEAKGFQIEPYHLRLIPLLVERMRTLKDFVELADYIFTDDFTVDEKAQELLAKDLPLGGLAEQLDATVWDADHIEAVLRQYAQDKGIKPRDYFPFIRAVISGKSVGPSLFHLMEAMPKDMVLRRLRKS</sequence>
<proteinExistence type="inferred from homology"/>
<comment type="function">
    <text evidence="1">Catalyzes the attachment of glutamate to tRNA(Glu) in a two-step reaction: glutamate is first activated by ATP to form Glu-AMP and then transferred to the acceptor end of tRNA(Glu).</text>
</comment>
<comment type="catalytic activity">
    <reaction evidence="1">
        <text>tRNA(Glu) + L-glutamate + ATP = L-glutamyl-tRNA(Glu) + AMP + diphosphate</text>
        <dbReference type="Rhea" id="RHEA:23540"/>
        <dbReference type="Rhea" id="RHEA-COMP:9663"/>
        <dbReference type="Rhea" id="RHEA-COMP:9680"/>
        <dbReference type="ChEBI" id="CHEBI:29985"/>
        <dbReference type="ChEBI" id="CHEBI:30616"/>
        <dbReference type="ChEBI" id="CHEBI:33019"/>
        <dbReference type="ChEBI" id="CHEBI:78442"/>
        <dbReference type="ChEBI" id="CHEBI:78520"/>
        <dbReference type="ChEBI" id="CHEBI:456215"/>
        <dbReference type="EC" id="6.1.1.17"/>
    </reaction>
</comment>
<comment type="subunit">
    <text evidence="1">Monomer.</text>
</comment>
<comment type="subcellular location">
    <subcellularLocation>
        <location evidence="1">Cytoplasm</location>
    </subcellularLocation>
</comment>
<comment type="similarity">
    <text evidence="1">Belongs to the class-I aminoacyl-tRNA synthetase family. Glutamate--tRNA ligase type 1 subfamily.</text>
</comment>
<gene>
    <name evidence="1" type="primary">gltX</name>
    <name type="ordered locus">COPRO5265_0442</name>
</gene>
<dbReference type="EC" id="6.1.1.17" evidence="1"/>
<dbReference type="EMBL" id="CP001145">
    <property type="protein sequence ID" value="ACI16900.1"/>
    <property type="molecule type" value="Genomic_DNA"/>
</dbReference>
<dbReference type="RefSeq" id="WP_012543552.1">
    <property type="nucleotide sequence ID" value="NC_011295.1"/>
</dbReference>
<dbReference type="SMR" id="B5Y7R0"/>
<dbReference type="STRING" id="309798.COPRO5265_0442"/>
<dbReference type="KEGG" id="cpo:COPRO5265_0442"/>
<dbReference type="eggNOG" id="COG0008">
    <property type="taxonomic scope" value="Bacteria"/>
</dbReference>
<dbReference type="HOGENOM" id="CLU_015768_6_1_9"/>
<dbReference type="OrthoDB" id="9807503at2"/>
<dbReference type="Proteomes" id="UP000001732">
    <property type="component" value="Chromosome"/>
</dbReference>
<dbReference type="GO" id="GO:0005829">
    <property type="term" value="C:cytosol"/>
    <property type="evidence" value="ECO:0007669"/>
    <property type="project" value="TreeGrafter"/>
</dbReference>
<dbReference type="GO" id="GO:0005524">
    <property type="term" value="F:ATP binding"/>
    <property type="evidence" value="ECO:0007669"/>
    <property type="project" value="UniProtKB-UniRule"/>
</dbReference>
<dbReference type="GO" id="GO:0004818">
    <property type="term" value="F:glutamate-tRNA ligase activity"/>
    <property type="evidence" value="ECO:0007669"/>
    <property type="project" value="UniProtKB-UniRule"/>
</dbReference>
<dbReference type="GO" id="GO:0000049">
    <property type="term" value="F:tRNA binding"/>
    <property type="evidence" value="ECO:0007669"/>
    <property type="project" value="InterPro"/>
</dbReference>
<dbReference type="GO" id="GO:0008270">
    <property type="term" value="F:zinc ion binding"/>
    <property type="evidence" value="ECO:0007669"/>
    <property type="project" value="InterPro"/>
</dbReference>
<dbReference type="GO" id="GO:0006424">
    <property type="term" value="P:glutamyl-tRNA aminoacylation"/>
    <property type="evidence" value="ECO:0007669"/>
    <property type="project" value="UniProtKB-UniRule"/>
</dbReference>
<dbReference type="CDD" id="cd00808">
    <property type="entry name" value="GluRS_core"/>
    <property type="match status" value="1"/>
</dbReference>
<dbReference type="FunFam" id="3.40.50.620:FF:000007">
    <property type="entry name" value="Glutamate--tRNA ligase"/>
    <property type="match status" value="1"/>
</dbReference>
<dbReference type="Gene3D" id="1.10.10.350">
    <property type="match status" value="1"/>
</dbReference>
<dbReference type="Gene3D" id="3.40.50.620">
    <property type="entry name" value="HUPs"/>
    <property type="match status" value="1"/>
</dbReference>
<dbReference type="HAMAP" id="MF_00022">
    <property type="entry name" value="Glu_tRNA_synth_type1"/>
    <property type="match status" value="1"/>
</dbReference>
<dbReference type="InterPro" id="IPR045462">
    <property type="entry name" value="aa-tRNA-synth_I_cd-bd"/>
</dbReference>
<dbReference type="InterPro" id="IPR020751">
    <property type="entry name" value="aa-tRNA-synth_I_codon-bd_sub2"/>
</dbReference>
<dbReference type="InterPro" id="IPR001412">
    <property type="entry name" value="aa-tRNA-synth_I_CS"/>
</dbReference>
<dbReference type="InterPro" id="IPR008925">
    <property type="entry name" value="aa_tRNA-synth_I_cd-bd_sf"/>
</dbReference>
<dbReference type="InterPro" id="IPR004527">
    <property type="entry name" value="Glu-tRNA-ligase_bac/mito"/>
</dbReference>
<dbReference type="InterPro" id="IPR000924">
    <property type="entry name" value="Glu/Gln-tRNA-synth"/>
</dbReference>
<dbReference type="InterPro" id="IPR020058">
    <property type="entry name" value="Glu/Gln-tRNA-synth_Ib_cat-dom"/>
</dbReference>
<dbReference type="InterPro" id="IPR049940">
    <property type="entry name" value="GluQ/Sye"/>
</dbReference>
<dbReference type="InterPro" id="IPR033910">
    <property type="entry name" value="GluRS_core"/>
</dbReference>
<dbReference type="InterPro" id="IPR014729">
    <property type="entry name" value="Rossmann-like_a/b/a_fold"/>
</dbReference>
<dbReference type="NCBIfam" id="TIGR00464">
    <property type="entry name" value="gltX_bact"/>
    <property type="match status" value="1"/>
</dbReference>
<dbReference type="NCBIfam" id="NF004315">
    <property type="entry name" value="PRK05710.1-4"/>
    <property type="match status" value="1"/>
</dbReference>
<dbReference type="PANTHER" id="PTHR43311">
    <property type="entry name" value="GLUTAMATE--TRNA LIGASE"/>
    <property type="match status" value="1"/>
</dbReference>
<dbReference type="PANTHER" id="PTHR43311:SF2">
    <property type="entry name" value="GLUTAMATE--TRNA LIGASE, MITOCHONDRIAL-RELATED"/>
    <property type="match status" value="1"/>
</dbReference>
<dbReference type="Pfam" id="PF19269">
    <property type="entry name" value="Anticodon_2"/>
    <property type="match status" value="1"/>
</dbReference>
<dbReference type="Pfam" id="PF00749">
    <property type="entry name" value="tRNA-synt_1c"/>
    <property type="match status" value="1"/>
</dbReference>
<dbReference type="PRINTS" id="PR00987">
    <property type="entry name" value="TRNASYNTHGLU"/>
</dbReference>
<dbReference type="SUPFAM" id="SSF48163">
    <property type="entry name" value="An anticodon-binding domain of class I aminoacyl-tRNA synthetases"/>
    <property type="match status" value="1"/>
</dbReference>
<dbReference type="SUPFAM" id="SSF52374">
    <property type="entry name" value="Nucleotidylyl transferase"/>
    <property type="match status" value="1"/>
</dbReference>
<dbReference type="PROSITE" id="PS00178">
    <property type="entry name" value="AA_TRNA_LIGASE_I"/>
    <property type="match status" value="1"/>
</dbReference>
<feature type="chain" id="PRO_0000367653" description="Glutamate--tRNA ligase">
    <location>
        <begin position="1"/>
        <end position="467"/>
    </location>
</feature>
<feature type="short sequence motif" description="'HIGH' region" evidence="1">
    <location>
        <begin position="15"/>
        <end position="25"/>
    </location>
</feature>
<feature type="short sequence motif" description="'KMSKS' region" evidence="1">
    <location>
        <begin position="249"/>
        <end position="253"/>
    </location>
</feature>
<feature type="binding site" evidence="1">
    <location>
        <position position="252"/>
    </location>
    <ligand>
        <name>ATP</name>
        <dbReference type="ChEBI" id="CHEBI:30616"/>
    </ligand>
</feature>
<organism>
    <name type="scientific">Coprothermobacter proteolyticus (strain ATCC 35245 / DSM 5265 / OCM 4 / BT)</name>
    <dbReference type="NCBI Taxonomy" id="309798"/>
    <lineage>
        <taxon>Bacteria</taxon>
        <taxon>Pseudomonadati</taxon>
        <taxon>Coprothermobacterota</taxon>
        <taxon>Coprothermobacteria</taxon>
        <taxon>Coprothermobacterales</taxon>
        <taxon>Coprothermobacteraceae</taxon>
        <taxon>Coprothermobacter</taxon>
    </lineage>
</organism>
<evidence type="ECO:0000255" key="1">
    <source>
        <dbReference type="HAMAP-Rule" id="MF_00022"/>
    </source>
</evidence>
<protein>
    <recommendedName>
        <fullName evidence="1">Glutamate--tRNA ligase</fullName>
        <ecNumber evidence="1">6.1.1.17</ecNumber>
    </recommendedName>
    <alternativeName>
        <fullName evidence="1">Glutamyl-tRNA synthetase</fullName>
        <shortName evidence="1">GluRS</shortName>
    </alternativeName>
</protein>
<keyword id="KW-0030">Aminoacyl-tRNA synthetase</keyword>
<keyword id="KW-0067">ATP-binding</keyword>
<keyword id="KW-0963">Cytoplasm</keyword>
<keyword id="KW-0436">Ligase</keyword>
<keyword id="KW-0547">Nucleotide-binding</keyword>
<keyword id="KW-0648">Protein biosynthesis</keyword>
<keyword id="KW-1185">Reference proteome</keyword>
<accession>B5Y7R0</accession>
<reference key="1">
    <citation type="submission" date="2008-08" db="EMBL/GenBank/DDBJ databases">
        <title>The complete genome sequence of Coprothermobacter proteolyticus strain ATCC 5245 / DSM 5265 / BT.</title>
        <authorList>
            <person name="Dodson R.J."/>
            <person name="Durkin A.S."/>
            <person name="Wu M."/>
            <person name="Eisen J."/>
            <person name="Sutton G."/>
        </authorList>
    </citation>
    <scope>NUCLEOTIDE SEQUENCE [LARGE SCALE GENOMIC DNA]</scope>
    <source>
        <strain>ATCC 35245 / DSM 5265 / OCM 4 / BT</strain>
    </source>
</reference>
<name>SYE_COPPD</name>